<sequence length="125" mass="13885">MAAKKSSTPNRGFKVADQIQRDLTELIRELKDPRIGMVTLQAVEVTPDYAHAKVFFSVLVGDADATQDALNQAAGFLRNGLFKRLHIHTVPTLHFMFDRTTERASDMNALIARAVASRSKDDDEA</sequence>
<name>RBFA_PARC0</name>
<evidence type="ECO:0000255" key="1">
    <source>
        <dbReference type="HAMAP-Rule" id="MF_00003"/>
    </source>
</evidence>
<feature type="chain" id="PRO_0000321196" description="Ribosome-binding factor A">
    <location>
        <begin position="1"/>
        <end position="125"/>
    </location>
</feature>
<comment type="function">
    <text evidence="1">One of several proteins that assist in the late maturation steps of the functional core of the 30S ribosomal subunit. Associates with free 30S ribosomal subunits (but not with 30S subunits that are part of 70S ribosomes or polysomes). Required for efficient processing of 16S rRNA. May interact with the 5'-terminal helix region of 16S rRNA.</text>
</comment>
<comment type="subunit">
    <text evidence="1">Monomer. Binds 30S ribosomal subunits, but not 50S ribosomal subunits or 70S ribosomes.</text>
</comment>
<comment type="subcellular location">
    <subcellularLocation>
        <location evidence="1">Cytoplasm</location>
    </subcellularLocation>
</comment>
<comment type="similarity">
    <text evidence="1">Belongs to the RbfA family.</text>
</comment>
<reference key="1">
    <citation type="submission" date="2006-12" db="EMBL/GenBank/DDBJ databases">
        <title>Complete sequence of Acidovorax avenae subsp. citrulli AAC00-1.</title>
        <authorList>
            <person name="Copeland A."/>
            <person name="Lucas S."/>
            <person name="Lapidus A."/>
            <person name="Barry K."/>
            <person name="Detter J.C."/>
            <person name="Glavina del Rio T."/>
            <person name="Dalin E."/>
            <person name="Tice H."/>
            <person name="Pitluck S."/>
            <person name="Kiss H."/>
            <person name="Brettin T."/>
            <person name="Bruce D."/>
            <person name="Han C."/>
            <person name="Tapia R."/>
            <person name="Gilna P."/>
            <person name="Schmutz J."/>
            <person name="Larimer F."/>
            <person name="Land M."/>
            <person name="Hauser L."/>
            <person name="Kyrpides N."/>
            <person name="Kim E."/>
            <person name="Stahl D."/>
            <person name="Richardson P."/>
        </authorList>
    </citation>
    <scope>NUCLEOTIDE SEQUENCE [LARGE SCALE GENOMIC DNA]</scope>
    <source>
        <strain>AAC00-1</strain>
    </source>
</reference>
<dbReference type="EMBL" id="CP000512">
    <property type="protein sequence ID" value="ABM33940.1"/>
    <property type="molecule type" value="Genomic_DNA"/>
</dbReference>
<dbReference type="RefSeq" id="WP_011796441.1">
    <property type="nucleotide sequence ID" value="NC_008752.1"/>
</dbReference>
<dbReference type="SMR" id="A1TSK2"/>
<dbReference type="STRING" id="397945.Aave_3382"/>
<dbReference type="GeneID" id="79793071"/>
<dbReference type="KEGG" id="aav:Aave_3382"/>
<dbReference type="eggNOG" id="COG0858">
    <property type="taxonomic scope" value="Bacteria"/>
</dbReference>
<dbReference type="HOGENOM" id="CLU_089475_5_1_4"/>
<dbReference type="OrthoDB" id="307788at2"/>
<dbReference type="Proteomes" id="UP000002596">
    <property type="component" value="Chromosome"/>
</dbReference>
<dbReference type="GO" id="GO:0005829">
    <property type="term" value="C:cytosol"/>
    <property type="evidence" value="ECO:0007669"/>
    <property type="project" value="TreeGrafter"/>
</dbReference>
<dbReference type="GO" id="GO:0043024">
    <property type="term" value="F:ribosomal small subunit binding"/>
    <property type="evidence" value="ECO:0007669"/>
    <property type="project" value="TreeGrafter"/>
</dbReference>
<dbReference type="GO" id="GO:0030490">
    <property type="term" value="P:maturation of SSU-rRNA"/>
    <property type="evidence" value="ECO:0007669"/>
    <property type="project" value="UniProtKB-UniRule"/>
</dbReference>
<dbReference type="Gene3D" id="3.30.300.20">
    <property type="match status" value="1"/>
</dbReference>
<dbReference type="HAMAP" id="MF_00003">
    <property type="entry name" value="RbfA"/>
    <property type="match status" value="1"/>
</dbReference>
<dbReference type="InterPro" id="IPR015946">
    <property type="entry name" value="KH_dom-like_a/b"/>
</dbReference>
<dbReference type="InterPro" id="IPR000238">
    <property type="entry name" value="RbfA"/>
</dbReference>
<dbReference type="InterPro" id="IPR023799">
    <property type="entry name" value="RbfA_dom_sf"/>
</dbReference>
<dbReference type="NCBIfam" id="TIGR00082">
    <property type="entry name" value="rbfA"/>
    <property type="match status" value="1"/>
</dbReference>
<dbReference type="PANTHER" id="PTHR33515">
    <property type="entry name" value="RIBOSOME-BINDING FACTOR A, CHLOROPLASTIC-RELATED"/>
    <property type="match status" value="1"/>
</dbReference>
<dbReference type="PANTHER" id="PTHR33515:SF1">
    <property type="entry name" value="RIBOSOME-BINDING FACTOR A, CHLOROPLASTIC-RELATED"/>
    <property type="match status" value="1"/>
</dbReference>
<dbReference type="Pfam" id="PF02033">
    <property type="entry name" value="RBFA"/>
    <property type="match status" value="1"/>
</dbReference>
<dbReference type="SUPFAM" id="SSF89919">
    <property type="entry name" value="Ribosome-binding factor A, RbfA"/>
    <property type="match status" value="1"/>
</dbReference>
<keyword id="KW-0963">Cytoplasm</keyword>
<keyword id="KW-0690">Ribosome biogenesis</keyword>
<protein>
    <recommendedName>
        <fullName evidence="1">Ribosome-binding factor A</fullName>
    </recommendedName>
</protein>
<proteinExistence type="inferred from homology"/>
<accession>A1TSK2</accession>
<gene>
    <name evidence="1" type="primary">rbfA</name>
    <name type="ordered locus">Aave_3382</name>
</gene>
<organism>
    <name type="scientific">Paracidovorax citrulli (strain AAC00-1)</name>
    <name type="common">Acidovorax citrulli</name>
    <dbReference type="NCBI Taxonomy" id="397945"/>
    <lineage>
        <taxon>Bacteria</taxon>
        <taxon>Pseudomonadati</taxon>
        <taxon>Pseudomonadota</taxon>
        <taxon>Betaproteobacteria</taxon>
        <taxon>Burkholderiales</taxon>
        <taxon>Comamonadaceae</taxon>
        <taxon>Paracidovorax</taxon>
    </lineage>
</organism>